<sequence length="1485" mass="168896">MQKTPLEKASIFSQIFFSWTKPILWKGYRQRLELSDIYQIHPGDSADNLSERLEREWDREVATSKKNPKLINALKRCFFWKFLFYGILLYLGEVTKAVQPLLLGRIIASYDRDNEHERSIAYYLAIGLCLLFVVRMLLLHPAIFGLHHIGMQMRIAMFSLIYKKTLKLSSKVLDKISTGQLVSLLSNNLNKFDEGLALAHFVWIAPLQVLLLMGLLWDLLQASAFCGLGFLIILSLFQARLGRMMMKYKDKRAGKINERLVITSQIIENIQSVKAYCWENAMEKIIETIRETELKLTRKAAYVRYFNSSAFFFSGFFVVFLSIVPHLLLDGISLRKIFTTISFSIVLRMAVTRQFPWAVQTWYDSLGVINKIQEFLQKEEYKSLEYNLTTTEVAMENVSASWDEGIGEFFEKAKLEVNGGNISNEDPSAFFSNFSLHVAPVLRNINFKIEKGQLLAIAGSTGAGKTSLLMMIMGELEPSAGKIKHSGRISFSPQVSWIMPGTIKENIVFGVSYDQYRYLSVIKACQLEEDISKFPEKDNTVLGEGGITLSGGQRARISLARAVYKDADLYLLDSPFSYLDLFTEKEIFESCVCKLMANKTRILVTSKVEQLKKADKVLILHEGSCYFYGTFSELEDQRPEFSSHLIGFDHFNAERRNSIITETLRRCSIDSDPSAVRNEVKNKSFKQVADFTEKRKSSIINPRKSSRKFSLMQKSQPQMSGIEEEDMPAEQGERKLSLVPESEQGEASLPRSNFLNTGPTFQGRRRQSVLNLMTRTSISQGSNAFATRNASVRKMSVNSYSNSSFDLDIYNRRLSQDSILEVSEEINEEDLKECFLDDTDSQSPTTTWNTYLRFLTAHKNFIFILVFCLVIFFVEVAASSAWLWIIKRNAPAINMTSNENVSEVSDTLSVIVTHTSFYYVFYIYVGVADSLLALGIFRGLPLVHSLISVSKVLHKKMLHAILHAPMSTFNTMRAGRILNRFSKDTAILDDILPLSIFDLTQLVLIVIGAITVVSLLEPYIFLATVPVIVAFILLRSYFLHTSQQLKQLESKARSPIFAHLITSLKGLWTLRAFGRQPYFETLFHKALNLHTANWFLYLSTLRWFQMTIEMIFVIFFIAVSFISIATSGAGEEKVGIVLTLAMNIMNTLQWAVNASIDVDSLMRSVSRIFRFIDLPVEELINENKNKEEQLSEVLIYENDYVKKTQVWPSGGQMTVKNLSANYIDGGNTVLENISFSLSPGQRVGLLGRTGSGKSTLLSAFLRLLSTQGDIQIDGVSWQTIPLQKWRKAFGVIPQKVFIFSGSIRKNLDPYGKWSDEELLKVTEEVGLKLIIDQFPGQLDFVLLDGGCVLSHGHKQLVCLARSVLSKAKILLLDEPSAHLDPITFQIIRKTLKHAFADCTVILSEHRLEAMLECQRFLVIEDNTVRQYDSIQKLVNEKSFFKQAISHSDRLKLFPLHRRNSSKRKSRPQISALQEETEEEVQDTRL</sequence>
<keyword id="KW-0067">ATP-binding</keyword>
<keyword id="KW-1003">Cell membrane</keyword>
<keyword id="KW-0868">Chloride</keyword>
<keyword id="KW-0869">Chloride channel</keyword>
<keyword id="KW-0256">Endoplasmic reticulum</keyword>
<keyword id="KW-0967">Endosome</keyword>
<keyword id="KW-0325">Glycoprotein</keyword>
<keyword id="KW-0407">Ion channel</keyword>
<keyword id="KW-0406">Ion transport</keyword>
<keyword id="KW-0413">Isomerase</keyword>
<keyword id="KW-0472">Membrane</keyword>
<keyword id="KW-0547">Nucleotide-binding</keyword>
<keyword id="KW-0597">Phosphoprotein</keyword>
<keyword id="KW-1185">Reference proteome</keyword>
<keyword id="KW-0677">Repeat</keyword>
<keyword id="KW-0812">Transmembrane</keyword>
<keyword id="KW-1133">Transmembrane helix</keyword>
<keyword id="KW-0813">Transport</keyword>
<comment type="function">
    <text evidence="1 2">Epithelial ion channel that plays an important role in the regulation of epithelial ion and water transport and fluid homeostasis. Mediates the transport of chloride ions across the cell membrane (By similarity). Possesses an intrinsic ATPase activity and utilizes ATP to gate its channel; the passive flow of anions through the channel is gated by cycles of ATP binding and hydrolysis by the ATP-binding domains (By similarity). The ion channel is also permeable to HCO(3)(-); selectivity depends on the extracellular chloride concentration. Exerts its function also by modulating the activity of other ion channels and transporters. Contributes to the regulation of the pH and the ion content of the epithelial fluid layer (By similarity).</text>
</comment>
<comment type="catalytic activity">
    <reaction evidence="1">
        <text>ATP + H2O + closed Cl(-) channel = ADP + phosphate + open Cl(-) channel.</text>
        <dbReference type="EC" id="5.6.1.6"/>
    </reaction>
</comment>
<comment type="catalytic activity">
    <reaction evidence="1">
        <text>chloride(in) = chloride(out)</text>
        <dbReference type="Rhea" id="RHEA:29823"/>
        <dbReference type="ChEBI" id="CHEBI:17996"/>
    </reaction>
</comment>
<comment type="catalytic activity">
    <reaction evidence="1">
        <text>hydrogencarbonate(in) = hydrogencarbonate(out)</text>
        <dbReference type="Rhea" id="RHEA:28695"/>
        <dbReference type="ChEBI" id="CHEBI:17544"/>
    </reaction>
</comment>
<comment type="catalytic activity">
    <reaction evidence="1">
        <text>ATP + H2O = ADP + phosphate + H(+)</text>
        <dbReference type="Rhea" id="RHEA:13065"/>
        <dbReference type="ChEBI" id="CHEBI:15377"/>
        <dbReference type="ChEBI" id="CHEBI:15378"/>
        <dbReference type="ChEBI" id="CHEBI:30616"/>
        <dbReference type="ChEBI" id="CHEBI:43474"/>
        <dbReference type="ChEBI" id="CHEBI:456216"/>
    </reaction>
    <physiologicalReaction direction="left-to-right" evidence="1">
        <dbReference type="Rhea" id="RHEA:13066"/>
    </physiologicalReaction>
</comment>
<comment type="subunit">
    <text evidence="1">Monomer; does not require oligomerization for channel activity. May form oligomers in the membrane (By similarity).</text>
</comment>
<comment type="subcellular location">
    <subcellularLocation>
        <location evidence="2">Apical cell membrane</location>
        <topology evidence="1">Multi-pass membrane protein</topology>
    </subcellularLocation>
    <subcellularLocation>
        <location evidence="1">Early endosome membrane</location>
        <topology evidence="1">Multi-pass membrane protein</topology>
    </subcellularLocation>
    <subcellularLocation>
        <location evidence="2">Cell membrane</location>
        <topology evidence="1">Multi-pass membrane protein</topology>
    </subcellularLocation>
    <subcellularLocation>
        <location evidence="1">Recycling endosome membrane</location>
        <topology evidence="1">Multi-pass membrane protein</topology>
    </subcellularLocation>
    <subcellularLocation>
        <location evidence="1">Endoplasmic reticulum membrane</location>
        <topology evidence="1">Multi-pass membrane protein</topology>
    </subcellularLocation>
    <text evidence="1">The channel is internalized from the cell surface into an endosomal recycling compartment, from where it is recycled to the cell membrane.</text>
</comment>
<comment type="domain">
    <text evidence="1 2">Binds and hydrolyzes ATP via the two cytoplasmic ABC transporter nucleotide-binding domains. The two ATP-binding domains interact with each other, forming a head-to-tail dimer. Normal ATPase activity requires interaction between the two domains. The first ABC transporter nucleotide-binding domain has no ATPase activity by itself.</text>
</comment>
<comment type="domain">
    <text evidence="1">The disordered R region mediates channel activation when it is phosphorylated, but not in the absence of phosphorylation.</text>
</comment>
<comment type="PTM">
    <text evidence="1">Phosphorylated; cAMP treatment promotes phosphorylation and activates the channel. Dephosphorylation decreases the ATPase activity (in vitro). Phosphorylation at PKA sites activates the channel. Phosphorylation at PKC sites enhances the response to phosphorylation by PKA.</text>
</comment>
<comment type="similarity">
    <text evidence="7">Belongs to the ABC transporter superfamily. ABCC family. CFTR transporter (TC 3.A.1.202) subfamily.</text>
</comment>
<reference key="1">
    <citation type="journal article" date="1992" name="Hum. Mol. Genet.">
        <title>Identification and developmental expression of the Xenopus laevis cystic fibrosis transmembrane conductance regulator gene.</title>
        <authorList>
            <person name="Tucker S.J."/>
            <person name="Tannahill D."/>
            <person name="Higgins C.F."/>
        </authorList>
    </citation>
    <scope>NUCLEOTIDE SEQUENCE [MRNA]</scope>
</reference>
<feature type="chain" id="PRO_0000093432" description="Cystic fibrosis transmembrane conductance regulator">
    <location>
        <begin position="1"/>
        <end position="1485"/>
    </location>
</feature>
<feature type="topological domain" description="Cytoplasmic" evidence="1">
    <location>
        <begin position="1"/>
        <end position="78"/>
    </location>
</feature>
<feature type="transmembrane region" description="Helical; Name=1" evidence="1">
    <location>
        <begin position="79"/>
        <end position="99"/>
    </location>
</feature>
<feature type="topological domain" description="Extracellular" evidence="1">
    <location>
        <begin position="100"/>
        <end position="123"/>
    </location>
</feature>
<feature type="transmembrane region" description="Helical; Name=2" evidence="1">
    <location>
        <begin position="124"/>
        <end position="147"/>
    </location>
</feature>
<feature type="topological domain" description="Cytoplasmic" evidence="1">
    <location>
        <begin position="148"/>
        <end position="196"/>
    </location>
</feature>
<feature type="transmembrane region" description="Helical; Name=3" evidence="1">
    <location>
        <begin position="197"/>
        <end position="217"/>
    </location>
</feature>
<feature type="topological domain" description="Extracellular" evidence="1">
    <location>
        <begin position="218"/>
        <end position="223"/>
    </location>
</feature>
<feature type="transmembrane region" description="Helical; Name=4" evidence="1">
    <location>
        <begin position="224"/>
        <end position="244"/>
    </location>
</feature>
<feature type="topological domain" description="Cytoplasmic" evidence="1">
    <location>
        <begin position="245"/>
        <end position="299"/>
    </location>
</feature>
<feature type="transmembrane region" description="Helical; Name=5" evidence="1">
    <location>
        <begin position="300"/>
        <end position="320"/>
    </location>
</feature>
<feature type="topological domain" description="Extracellular" evidence="1">
    <location>
        <begin position="321"/>
        <end position="340"/>
    </location>
</feature>
<feature type="transmembrane region" description="Helical; Name=6" evidence="1">
    <location>
        <begin position="341"/>
        <end position="359"/>
    </location>
</feature>
<feature type="topological domain" description="Cytoplasmic" evidence="1">
    <location>
        <begin position="360"/>
        <end position="860"/>
    </location>
</feature>
<feature type="transmembrane region" description="Helical; Name=7" evidence="1">
    <location>
        <begin position="861"/>
        <end position="881"/>
    </location>
</feature>
<feature type="topological domain" description="Extracellular" evidence="1">
    <location>
        <begin position="882"/>
        <end position="923"/>
    </location>
</feature>
<feature type="transmembrane region" description="Discontinuously helical; Name=8" evidence="1">
    <location>
        <begin position="924"/>
        <end position="944"/>
    </location>
</feature>
<feature type="topological domain" description="Cytoplasmic" evidence="1">
    <location>
        <begin position="945"/>
        <end position="995"/>
    </location>
</feature>
<feature type="transmembrane region" description="Helical; Name=9" evidence="1">
    <location>
        <begin position="996"/>
        <end position="1016"/>
    </location>
</feature>
<feature type="topological domain" description="Extracellular" evidence="1">
    <location>
        <begin position="1017"/>
        <end position="1018"/>
    </location>
</feature>
<feature type="transmembrane region" description="Helical; Name=10" evidence="1">
    <location>
        <begin position="1019"/>
        <end position="1039"/>
    </location>
</feature>
<feature type="topological domain" description="Cytoplasmic" evidence="1">
    <location>
        <begin position="1040"/>
        <end position="1100"/>
    </location>
</feature>
<feature type="transmembrane region" description="Helical; Name=11" evidence="1">
    <location>
        <begin position="1101"/>
        <end position="1121"/>
    </location>
</feature>
<feature type="topological domain" description="Extracellular" evidence="1">
    <location>
        <begin position="1122"/>
        <end position="1135"/>
    </location>
</feature>
<feature type="transmembrane region" description="Helical; Name=12" evidence="1">
    <location>
        <begin position="1136"/>
        <end position="1156"/>
    </location>
</feature>
<feature type="topological domain" description="Cytoplasmic" evidence="1">
    <location>
        <begin position="1157"/>
        <end position="1485"/>
    </location>
</feature>
<feature type="domain" description="ABC transmembrane type-1 1" evidence="5">
    <location>
        <begin position="82"/>
        <end position="366"/>
    </location>
</feature>
<feature type="domain" description="ABC transporter 1" evidence="4">
    <location>
        <begin position="422"/>
        <end position="647"/>
    </location>
</feature>
<feature type="domain" description="ABC transmembrane type-1 2" evidence="5">
    <location>
        <begin position="880"/>
        <end position="1163"/>
    </location>
</feature>
<feature type="domain" description="ABC transporter 2" evidence="4">
    <location>
        <begin position="1213"/>
        <end position="1446"/>
    </location>
</feature>
<feature type="region of interest" description="Disordered R region" evidence="1">
    <location>
        <begin position="652"/>
        <end position="833"/>
    </location>
</feature>
<feature type="region of interest" description="Disordered" evidence="6">
    <location>
        <begin position="1458"/>
        <end position="1485"/>
    </location>
</feature>
<feature type="short sequence motif" description="PDZ-binding" evidence="1">
    <location>
        <begin position="1483"/>
        <end position="1485"/>
    </location>
</feature>
<feature type="compositionally biased region" description="Polar residues" evidence="6">
    <location>
        <begin position="750"/>
        <end position="760"/>
    </location>
</feature>
<feature type="compositionally biased region" description="Acidic residues" evidence="6">
    <location>
        <begin position="1474"/>
        <end position="1485"/>
    </location>
</feature>
<feature type="binding site" evidence="1">
    <location>
        <position position="402"/>
    </location>
    <ligand>
        <name>ATP</name>
        <dbReference type="ChEBI" id="CHEBI:30616"/>
        <label>1</label>
    </ligand>
</feature>
<feature type="binding site" evidence="1">
    <location>
        <position position="435"/>
    </location>
    <ligand>
        <name>ATP</name>
        <dbReference type="ChEBI" id="CHEBI:30616"/>
        <label>1</label>
    </ligand>
</feature>
<feature type="binding site" evidence="4">
    <location>
        <begin position="459"/>
        <end position="466"/>
    </location>
    <ligand>
        <name>ATP</name>
        <dbReference type="ChEBI" id="CHEBI:30616"/>
        <label>1</label>
    </ligand>
</feature>
<feature type="binding site" evidence="2">
    <location>
        <position position="494"/>
    </location>
    <ligand>
        <name>ATP</name>
        <dbReference type="ChEBI" id="CHEBI:30616"/>
        <label>1</label>
    </ligand>
</feature>
<feature type="binding site" evidence="1">
    <location>
        <position position="1222"/>
    </location>
    <ligand>
        <name>ATP</name>
        <dbReference type="ChEBI" id="CHEBI:30616"/>
        <label>2</label>
    </ligand>
</feature>
<feature type="binding site" evidence="4">
    <location>
        <begin position="1247"/>
        <end position="1254"/>
    </location>
    <ligand>
        <name>ATP</name>
        <dbReference type="ChEBI" id="CHEBI:30616"/>
        <label>2</label>
    </ligand>
</feature>
<feature type="glycosylation site" description="N-linked (GlcNAc...) asparagine" evidence="3">
    <location>
        <position position="894"/>
    </location>
</feature>
<feature type="glycosylation site" description="N-linked (GlcNAc...) asparagine" evidence="3">
    <location>
        <position position="900"/>
    </location>
</feature>
<evidence type="ECO:0000250" key="1">
    <source>
        <dbReference type="UniProtKB" id="P13569"/>
    </source>
</evidence>
<evidence type="ECO:0000250" key="2">
    <source>
        <dbReference type="UniProtKB" id="P26361"/>
    </source>
</evidence>
<evidence type="ECO:0000255" key="3"/>
<evidence type="ECO:0000255" key="4">
    <source>
        <dbReference type="PROSITE-ProRule" id="PRU00434"/>
    </source>
</evidence>
<evidence type="ECO:0000255" key="5">
    <source>
        <dbReference type="PROSITE-ProRule" id="PRU00441"/>
    </source>
</evidence>
<evidence type="ECO:0000256" key="6">
    <source>
        <dbReference type="SAM" id="MobiDB-lite"/>
    </source>
</evidence>
<evidence type="ECO:0000305" key="7"/>
<protein>
    <recommendedName>
        <fullName evidence="1">Cystic fibrosis transmembrane conductance regulator</fullName>
        <shortName>CFTR</shortName>
    </recommendedName>
    <alternativeName>
        <fullName>ATP-binding cassette sub-family C member 7</fullName>
    </alternativeName>
    <alternativeName>
        <fullName>Channel conductance-controlling ATPase</fullName>
        <ecNumber evidence="1">5.6.1.6</ecNumber>
    </alternativeName>
    <alternativeName>
        <fullName>cAMP-dependent chloride channel</fullName>
    </alternativeName>
</protein>
<organism>
    <name type="scientific">Xenopus laevis</name>
    <name type="common">African clawed frog</name>
    <dbReference type="NCBI Taxonomy" id="8355"/>
    <lineage>
        <taxon>Eukaryota</taxon>
        <taxon>Metazoa</taxon>
        <taxon>Chordata</taxon>
        <taxon>Craniata</taxon>
        <taxon>Vertebrata</taxon>
        <taxon>Euteleostomi</taxon>
        <taxon>Amphibia</taxon>
        <taxon>Batrachia</taxon>
        <taxon>Anura</taxon>
        <taxon>Pipoidea</taxon>
        <taxon>Pipidae</taxon>
        <taxon>Xenopodinae</taxon>
        <taxon>Xenopus</taxon>
        <taxon>Xenopus</taxon>
    </lineage>
</organism>
<dbReference type="EC" id="5.6.1.6" evidence="1"/>
<dbReference type="EMBL" id="X65256">
    <property type="protein sequence ID" value="CAA46348.1"/>
    <property type="molecule type" value="mRNA"/>
</dbReference>
<dbReference type="PIR" id="S23756">
    <property type="entry name" value="S23756"/>
</dbReference>
<dbReference type="SMR" id="P26363"/>
<dbReference type="GlyCosmos" id="P26363">
    <property type="glycosylation" value="2 sites, No reported glycans"/>
</dbReference>
<dbReference type="AGR" id="Xenbase:XB-GENE-866530"/>
<dbReference type="Xenbase" id="XB-GENE-866530">
    <property type="gene designation" value="cftr.L"/>
</dbReference>
<dbReference type="Proteomes" id="UP000186698">
    <property type="component" value="Unplaced"/>
</dbReference>
<dbReference type="GO" id="GO:0016324">
    <property type="term" value="C:apical plasma membrane"/>
    <property type="evidence" value="ECO:0000318"/>
    <property type="project" value="GO_Central"/>
</dbReference>
<dbReference type="GO" id="GO:0034707">
    <property type="term" value="C:chloride channel complex"/>
    <property type="evidence" value="ECO:0007669"/>
    <property type="project" value="UniProtKB-KW"/>
</dbReference>
<dbReference type="GO" id="GO:0005829">
    <property type="term" value="C:cytosol"/>
    <property type="evidence" value="ECO:0000318"/>
    <property type="project" value="GO_Central"/>
</dbReference>
<dbReference type="GO" id="GO:0031901">
    <property type="term" value="C:early endosome membrane"/>
    <property type="evidence" value="ECO:0007669"/>
    <property type="project" value="UniProtKB-SubCell"/>
</dbReference>
<dbReference type="GO" id="GO:0005789">
    <property type="term" value="C:endoplasmic reticulum membrane"/>
    <property type="evidence" value="ECO:0000250"/>
    <property type="project" value="UniProtKB"/>
</dbReference>
<dbReference type="GO" id="GO:0016020">
    <property type="term" value="C:membrane"/>
    <property type="evidence" value="ECO:0000250"/>
    <property type="project" value="UniProtKB"/>
</dbReference>
<dbReference type="GO" id="GO:0005886">
    <property type="term" value="C:plasma membrane"/>
    <property type="evidence" value="ECO:0000250"/>
    <property type="project" value="UniProtKB"/>
</dbReference>
<dbReference type="GO" id="GO:0055038">
    <property type="term" value="C:recycling endosome membrane"/>
    <property type="evidence" value="ECO:0007669"/>
    <property type="project" value="UniProtKB-SubCell"/>
</dbReference>
<dbReference type="GO" id="GO:0140359">
    <property type="term" value="F:ABC-type transporter activity"/>
    <property type="evidence" value="ECO:0007669"/>
    <property type="project" value="InterPro"/>
</dbReference>
<dbReference type="GO" id="GO:0005524">
    <property type="term" value="F:ATP binding"/>
    <property type="evidence" value="ECO:0007669"/>
    <property type="project" value="UniProtKB-KW"/>
</dbReference>
<dbReference type="GO" id="GO:0016887">
    <property type="term" value="F:ATP hydrolysis activity"/>
    <property type="evidence" value="ECO:0000250"/>
    <property type="project" value="UniProtKB"/>
</dbReference>
<dbReference type="GO" id="GO:0042626">
    <property type="term" value="F:ATPase-coupled transmembrane transporter activity"/>
    <property type="evidence" value="ECO:0000318"/>
    <property type="project" value="GO_Central"/>
</dbReference>
<dbReference type="GO" id="GO:0015106">
    <property type="term" value="F:bicarbonate transmembrane transporter activity"/>
    <property type="evidence" value="ECO:0000250"/>
    <property type="project" value="UniProtKB"/>
</dbReference>
<dbReference type="GO" id="GO:0005254">
    <property type="term" value="F:chloride channel activity"/>
    <property type="evidence" value="ECO:0000250"/>
    <property type="project" value="UniProtKB"/>
</dbReference>
<dbReference type="GO" id="GO:0015108">
    <property type="term" value="F:chloride transmembrane transporter activity"/>
    <property type="evidence" value="ECO:0000250"/>
    <property type="project" value="UniProtKB"/>
</dbReference>
<dbReference type="GO" id="GO:0005260">
    <property type="term" value="F:intracellularly ATP-gated chloride channel activity"/>
    <property type="evidence" value="ECO:0000250"/>
    <property type="project" value="UniProtKB"/>
</dbReference>
<dbReference type="GO" id="GO:0015701">
    <property type="term" value="P:bicarbonate transport"/>
    <property type="evidence" value="ECO:0000250"/>
    <property type="project" value="UniProtKB"/>
</dbReference>
<dbReference type="GO" id="GO:0071320">
    <property type="term" value="P:cellular response to cAMP"/>
    <property type="evidence" value="ECO:0000250"/>
    <property type="project" value="UniProtKB"/>
</dbReference>
<dbReference type="GO" id="GO:1904322">
    <property type="term" value="P:cellular response to forskolin"/>
    <property type="evidence" value="ECO:0000250"/>
    <property type="project" value="UniProtKB"/>
</dbReference>
<dbReference type="GO" id="GO:1902476">
    <property type="term" value="P:chloride transmembrane transport"/>
    <property type="evidence" value="ECO:0000250"/>
    <property type="project" value="UniProtKB"/>
</dbReference>
<dbReference type="GO" id="GO:0051454">
    <property type="term" value="P:intracellular pH elevation"/>
    <property type="evidence" value="ECO:0000250"/>
    <property type="project" value="UniProtKB"/>
</dbReference>
<dbReference type="GO" id="GO:0060081">
    <property type="term" value="P:membrane hyperpolarization"/>
    <property type="evidence" value="ECO:0000250"/>
    <property type="project" value="UniProtKB"/>
</dbReference>
<dbReference type="GO" id="GO:0050891">
    <property type="term" value="P:multicellular organismal-level water homeostasis"/>
    <property type="evidence" value="ECO:0000250"/>
    <property type="project" value="UniProtKB"/>
</dbReference>
<dbReference type="GO" id="GO:0048240">
    <property type="term" value="P:sperm capacitation"/>
    <property type="evidence" value="ECO:0000250"/>
    <property type="project" value="UniProtKB"/>
</dbReference>
<dbReference type="GO" id="GO:0035377">
    <property type="term" value="P:transepithelial water transport"/>
    <property type="evidence" value="ECO:0000250"/>
    <property type="project" value="UniProtKB"/>
</dbReference>
<dbReference type="CDD" id="cd18594">
    <property type="entry name" value="ABC_6TM_CFTR_D1"/>
    <property type="match status" value="1"/>
</dbReference>
<dbReference type="CDD" id="cd18600">
    <property type="entry name" value="ABC_6TM_CFTR_D2"/>
    <property type="match status" value="1"/>
</dbReference>
<dbReference type="CDD" id="cd03291">
    <property type="entry name" value="ABCC_CFTR1"/>
    <property type="match status" value="1"/>
</dbReference>
<dbReference type="CDD" id="cd03289">
    <property type="entry name" value="ABCC_CFTR2"/>
    <property type="match status" value="1"/>
</dbReference>
<dbReference type="FunFam" id="1.20.1560.10:FF:000017">
    <property type="entry name" value="Cystic fibrosis transmembrane conductance regulator"/>
    <property type="match status" value="1"/>
</dbReference>
<dbReference type="FunFam" id="1.20.1560.10:FF:000019">
    <property type="entry name" value="Cystic fibrosis transmembrane conductance regulator"/>
    <property type="match status" value="1"/>
</dbReference>
<dbReference type="FunFam" id="3.40.50.300:FF:000581">
    <property type="entry name" value="Cystic fibrosis transmembrane conductance regulator"/>
    <property type="match status" value="1"/>
</dbReference>
<dbReference type="FunFam" id="3.40.50.300:FF:000591">
    <property type="entry name" value="Cystic fibrosis transmembrane conductance regulator"/>
    <property type="match status" value="1"/>
</dbReference>
<dbReference type="Gene3D" id="1.20.1560.10">
    <property type="entry name" value="ABC transporter type 1, transmembrane domain"/>
    <property type="match status" value="2"/>
</dbReference>
<dbReference type="Gene3D" id="3.40.50.300">
    <property type="entry name" value="P-loop containing nucleotide triphosphate hydrolases"/>
    <property type="match status" value="2"/>
</dbReference>
<dbReference type="InterPro" id="IPR003593">
    <property type="entry name" value="AAA+_ATPase"/>
</dbReference>
<dbReference type="InterPro" id="IPR011527">
    <property type="entry name" value="ABC1_TM_dom"/>
</dbReference>
<dbReference type="InterPro" id="IPR036640">
    <property type="entry name" value="ABC1_TM_sf"/>
</dbReference>
<dbReference type="InterPro" id="IPR003439">
    <property type="entry name" value="ABC_transporter-like_ATP-bd"/>
</dbReference>
<dbReference type="InterPro" id="IPR017871">
    <property type="entry name" value="ABC_transporter-like_CS"/>
</dbReference>
<dbReference type="InterPro" id="IPR050173">
    <property type="entry name" value="ABC_transporter_C-like"/>
</dbReference>
<dbReference type="InterPro" id="IPR009147">
    <property type="entry name" value="CFTR/ABCC7"/>
</dbReference>
<dbReference type="InterPro" id="IPR047082">
    <property type="entry name" value="CFTR1_ATP-bd_dom1"/>
</dbReference>
<dbReference type="InterPro" id="IPR025837">
    <property type="entry name" value="CFTR_reg_dom"/>
</dbReference>
<dbReference type="InterPro" id="IPR027417">
    <property type="entry name" value="P-loop_NTPase"/>
</dbReference>
<dbReference type="NCBIfam" id="TIGR01271">
    <property type="entry name" value="CFTR_protein"/>
    <property type="match status" value="1"/>
</dbReference>
<dbReference type="PANTHER" id="PTHR24223">
    <property type="entry name" value="ATP-BINDING CASSETTE SUB-FAMILY C"/>
    <property type="match status" value="1"/>
</dbReference>
<dbReference type="PANTHER" id="PTHR24223:SF19">
    <property type="entry name" value="CYSTIC FIBROSIS TRANSMEMBRANE CONDUCTANCE REGULATOR"/>
    <property type="match status" value="1"/>
</dbReference>
<dbReference type="Pfam" id="PF00664">
    <property type="entry name" value="ABC_membrane"/>
    <property type="match status" value="2"/>
</dbReference>
<dbReference type="Pfam" id="PF00005">
    <property type="entry name" value="ABC_tran"/>
    <property type="match status" value="2"/>
</dbReference>
<dbReference type="Pfam" id="PF14396">
    <property type="entry name" value="CFTR_R"/>
    <property type="match status" value="1"/>
</dbReference>
<dbReference type="PRINTS" id="PR01851">
    <property type="entry name" value="CYSFIBREGLTR"/>
</dbReference>
<dbReference type="SMART" id="SM00382">
    <property type="entry name" value="AAA"/>
    <property type="match status" value="2"/>
</dbReference>
<dbReference type="SUPFAM" id="SSF90123">
    <property type="entry name" value="ABC transporter transmembrane region"/>
    <property type="match status" value="2"/>
</dbReference>
<dbReference type="SUPFAM" id="SSF52540">
    <property type="entry name" value="P-loop containing nucleoside triphosphate hydrolases"/>
    <property type="match status" value="2"/>
</dbReference>
<dbReference type="PROSITE" id="PS50929">
    <property type="entry name" value="ABC_TM1F"/>
    <property type="match status" value="2"/>
</dbReference>
<dbReference type="PROSITE" id="PS00211">
    <property type="entry name" value="ABC_TRANSPORTER_1"/>
    <property type="match status" value="1"/>
</dbReference>
<dbReference type="PROSITE" id="PS50893">
    <property type="entry name" value="ABC_TRANSPORTER_2"/>
    <property type="match status" value="2"/>
</dbReference>
<proteinExistence type="evidence at transcript level"/>
<gene>
    <name evidence="1" type="primary">cftr</name>
    <name type="synonym">abcc7</name>
</gene>
<name>CFTR_XENLA</name>
<accession>P26363</accession>